<comment type="function">
    <text evidence="6 7">Inactive serine protease which plays an essential role in the innate immune response against bacteria, fungi and protozoa infection by activating the melanization cascade (PubMed:31765430, PubMed:33045027). In the melanization cascade, acts downstream of TEP1, SPCLIP1 and CLIPA8 to promote CLIPC9 proteolytic cleavage (PubMed:31765430, PubMed:33045027). In the susceptible strain G3, appears to be dispensable for parasite P.berghei ookinete elimination which occurs by lysis (PubMed:31765430). Required for the melanization of Gram-positive and Gram-negative bacteria (PubMed:31765430, PubMed:33045027). Required for the melanization of fungus B.bassiana (PubMed:31765430).</text>
</comment>
<comment type="subunit">
    <text evidence="6">May form a heterodimer of a light chain and a heavy chain; disulfide-linked.</text>
</comment>
<comment type="subcellular location">
    <subcellularLocation>
        <location evidence="6 7">Secreted</location>
    </subcellularLocation>
    <text evidence="6 7">Secreted into the hemolymph.</text>
</comment>
<comment type="PTM">
    <text evidence="6 7">Secreted as a full-length protein (PubMed:31765430, PubMed:33045027). Proteolytically cleaved into two chains which probably remain covalently linked (PubMed:31765430). Cleavage is induced by fungus B.bassiana and Gram-positive or Gram-negative bacteria infection (PubMed:31765430, PubMed:33045027).</text>
</comment>
<comment type="disruption phenotype">
    <text evidence="6 7">RNAi-mediated knockdown causes a loss in phenoloxidase (PO) activity, a reduction in microbe melanization and CLIPA14 proteolytic cleavage in response to S.aureus infection (PubMed:31765430). Also, causes a reduction in microbe melanization and CLIPC9 proteolytic cleavage in response to E.coli infection (PubMed:33045027). RNAi-mediated knockdown in the susceptible strain G3 infected with P.berghei, does not affect the number of oocysts and ookinete melanization; however, severely reduces ookinete melanization caused by CTL4 RNAi-mediated knockdown (PubMed:31765430). Increases susceptibility to fungus B.bassiana-mediated infection but not to P.berghei, E.coli or S.aureus-mediated infection (PubMed:31765430).</text>
</comment>
<comment type="similarity">
    <text evidence="9">Belongs to the peptidase S1 family. CLIP subfamily.</text>
</comment>
<comment type="caution">
    <text evidence="9">Although it belongs to peptidase S1 family, lacks the conserved Ser residue within the catalytic triad (Asp-His-Ser) which is replaced by a Gly residue, probably resulting in a loss of proteolytic activity.</text>
</comment>
<feature type="signal peptide" evidence="2">
    <location>
        <begin position="1"/>
        <end position="19"/>
    </location>
</feature>
<feature type="chain" id="PRO_5012932916" description="Inactive CLIP domain-containing serine protease A28" evidence="2">
    <location>
        <begin position="20"/>
        <end position="376"/>
    </location>
</feature>
<feature type="chain" id="PRO_0000455765" description="Inactive CLIP domain-containing serine protease A28 light chain" evidence="1">
    <location>
        <begin position="20"/>
        <end position="60"/>
    </location>
</feature>
<feature type="chain" id="PRO_0000455766" description="Inactive CLIP domain-containing serine protease A28 heavy chain" evidence="1">
    <location>
        <begin position="61"/>
        <end position="376"/>
    </location>
</feature>
<feature type="domain" description="Clip" evidence="1">
    <location>
        <begin position="24"/>
        <end position="80"/>
    </location>
</feature>
<feature type="domain" description="Peptidase S1" evidence="3">
    <location>
        <begin position="114"/>
        <end position="364"/>
    </location>
</feature>
<feature type="region of interest" description="Disordered" evidence="5">
    <location>
        <begin position="85"/>
        <end position="106"/>
    </location>
</feature>
<feature type="site" description="Cleavage" evidence="1">
    <location>
        <begin position="60"/>
        <end position="61"/>
    </location>
</feature>
<feature type="glycosylation site" description="N-linked (GlcNAc...) asparagine" evidence="4">
    <location>
        <position position="41"/>
    </location>
</feature>
<feature type="glycosylation site" description="N-linked (GlcNAc...) asparagine" evidence="4">
    <location>
        <position position="125"/>
    </location>
</feature>
<feature type="glycosylation site" description="N-linked (GlcNAc...) asparagine" evidence="4">
    <location>
        <position position="279"/>
    </location>
</feature>
<feature type="glycosylation site" description="N-linked (GlcNAc...) asparagine" evidence="4">
    <location>
        <position position="369"/>
    </location>
</feature>
<feature type="disulfide bond" evidence="1">
    <location>
        <begin position="28"/>
        <end position="78"/>
    </location>
</feature>
<feature type="disulfide bond" evidence="1">
    <location>
        <begin position="33"/>
        <end position="71"/>
    </location>
</feature>
<feature type="disulfide bond" evidence="1">
    <location>
        <begin position="39"/>
        <end position="79"/>
    </location>
</feature>
<feature type="disulfide bond" evidence="3">
    <location>
        <begin position="251"/>
        <end position="321"/>
    </location>
</feature>
<feature type="disulfide bond" evidence="3">
    <location>
        <begin position="280"/>
        <end position="301"/>
    </location>
</feature>
<feature type="disulfide bond" evidence="3">
    <location>
        <begin position="311"/>
        <end position="340"/>
    </location>
</feature>
<protein>
    <recommendedName>
        <fullName evidence="8">Inactive CLIP domain-containing serine protease A28</fullName>
    </recommendedName>
    <component>
        <recommendedName>
            <fullName evidence="9">Inactive CLIP domain-containing serine protease A28 light chain</fullName>
        </recommendedName>
    </component>
    <component>
        <recommendedName>
            <fullName evidence="9">Inactive CLIP domain-containing serine protease A28 heavy chain</fullName>
        </recommendedName>
    </component>
</protein>
<gene>
    <name evidence="8" type="primary">CLIPA28</name>
    <name evidence="9" type="ORF">AGAP010730</name>
</gene>
<name>CLA28_ANOGA</name>
<evidence type="ECO:0000250" key="1">
    <source>
        <dbReference type="UniProtKB" id="Q9GRW0"/>
    </source>
</evidence>
<evidence type="ECO:0000255" key="2"/>
<evidence type="ECO:0000255" key="3">
    <source>
        <dbReference type="PROSITE-ProRule" id="PRU00274"/>
    </source>
</evidence>
<evidence type="ECO:0000255" key="4">
    <source>
        <dbReference type="PROSITE-ProRule" id="PRU00498"/>
    </source>
</evidence>
<evidence type="ECO:0000256" key="5">
    <source>
        <dbReference type="SAM" id="MobiDB-lite"/>
    </source>
</evidence>
<evidence type="ECO:0000269" key="6">
    <source>
    </source>
</evidence>
<evidence type="ECO:0000269" key="7">
    <source>
    </source>
</evidence>
<evidence type="ECO:0000303" key="8">
    <source>
    </source>
</evidence>
<evidence type="ECO:0000305" key="9"/>
<evidence type="ECO:0000312" key="10">
    <source>
        <dbReference type="Proteomes" id="UP000007062"/>
    </source>
</evidence>
<accession>A0A1S4H5M5</accession>
<dbReference type="EMBL" id="AAAB01008848">
    <property type="status" value="NOT_ANNOTATED_CDS"/>
    <property type="molecule type" value="Genomic_DNA"/>
</dbReference>
<dbReference type="SMR" id="A0A1S4H5M5"/>
<dbReference type="GlyCosmos" id="A0A1S4H5M5">
    <property type="glycosylation" value="4 sites, No reported glycans"/>
</dbReference>
<dbReference type="EnsemblMetazoa" id="AGAP010730-RA">
    <property type="protein sequence ID" value="AGAP010730-PA"/>
    <property type="gene ID" value="AGAP010730"/>
</dbReference>
<dbReference type="VEuPathDB" id="VectorBase:AGAMI1_002574"/>
<dbReference type="VEuPathDB" id="VectorBase:AGAP010730"/>
<dbReference type="InParanoid" id="A0A1S4H5M5"/>
<dbReference type="Proteomes" id="UP000007062">
    <property type="component" value="Chromosome 3L"/>
</dbReference>
<dbReference type="GO" id="GO:0005615">
    <property type="term" value="C:extracellular space"/>
    <property type="evidence" value="ECO:0000314"/>
    <property type="project" value="UniProtKB"/>
</dbReference>
<dbReference type="GO" id="GO:0004252">
    <property type="term" value="F:serine-type endopeptidase activity"/>
    <property type="evidence" value="ECO:0000318"/>
    <property type="project" value="GO_Central"/>
</dbReference>
<dbReference type="GO" id="GO:0042742">
    <property type="term" value="P:defense response to bacterium"/>
    <property type="evidence" value="ECO:0000315"/>
    <property type="project" value="UniProtKB"/>
</dbReference>
<dbReference type="GO" id="GO:0045087">
    <property type="term" value="P:innate immune response"/>
    <property type="evidence" value="ECO:0007669"/>
    <property type="project" value="UniProtKB-KW"/>
</dbReference>
<dbReference type="GO" id="GO:0035008">
    <property type="term" value="P:positive regulation of melanization defense response"/>
    <property type="evidence" value="ECO:0000315"/>
    <property type="project" value="UniProtKB"/>
</dbReference>
<dbReference type="GO" id="GO:0010954">
    <property type="term" value="P:positive regulation of protein processing"/>
    <property type="evidence" value="ECO:0000315"/>
    <property type="project" value="UniProtKB"/>
</dbReference>
<dbReference type="GO" id="GO:0006508">
    <property type="term" value="P:proteolysis"/>
    <property type="evidence" value="ECO:0000318"/>
    <property type="project" value="GO_Central"/>
</dbReference>
<dbReference type="CDD" id="cd00190">
    <property type="entry name" value="Tryp_SPc"/>
    <property type="match status" value="1"/>
</dbReference>
<dbReference type="FunFam" id="2.40.10.10:FF:000002">
    <property type="entry name" value="Transmembrane protease serine"/>
    <property type="match status" value="1"/>
</dbReference>
<dbReference type="Gene3D" id="2.40.10.10">
    <property type="entry name" value="Trypsin-like serine proteases"/>
    <property type="match status" value="2"/>
</dbReference>
<dbReference type="InterPro" id="IPR009003">
    <property type="entry name" value="Peptidase_S1_PA"/>
</dbReference>
<dbReference type="InterPro" id="IPR043504">
    <property type="entry name" value="Peptidase_S1_PA_chymotrypsin"/>
</dbReference>
<dbReference type="InterPro" id="IPR001314">
    <property type="entry name" value="Peptidase_S1A"/>
</dbReference>
<dbReference type="InterPro" id="IPR001254">
    <property type="entry name" value="Trypsin_dom"/>
</dbReference>
<dbReference type="PANTHER" id="PTHR24258:SF129">
    <property type="entry name" value="LP15124P-RELATED"/>
    <property type="match status" value="1"/>
</dbReference>
<dbReference type="PANTHER" id="PTHR24258">
    <property type="entry name" value="SERINE PROTEASE-RELATED"/>
    <property type="match status" value="1"/>
</dbReference>
<dbReference type="Pfam" id="PF00089">
    <property type="entry name" value="Trypsin"/>
    <property type="match status" value="1"/>
</dbReference>
<dbReference type="PRINTS" id="PR00722">
    <property type="entry name" value="CHYMOTRYPSIN"/>
</dbReference>
<dbReference type="SMART" id="SM00020">
    <property type="entry name" value="Tryp_SPc"/>
    <property type="match status" value="1"/>
</dbReference>
<dbReference type="SUPFAM" id="SSF50494">
    <property type="entry name" value="Trypsin-like serine proteases"/>
    <property type="match status" value="1"/>
</dbReference>
<dbReference type="PROSITE" id="PS50240">
    <property type="entry name" value="TRYPSIN_DOM"/>
    <property type="match status" value="1"/>
</dbReference>
<proteinExistence type="evidence at protein level"/>
<reference evidence="10" key="1">
    <citation type="journal article" date="2002" name="Science">
        <title>The genome sequence of the malaria mosquito Anopheles gambiae.</title>
        <authorList>
            <person name="Holt R.A."/>
            <person name="Subramanian G.M."/>
            <person name="Halpern A."/>
            <person name="Sutton G.G."/>
            <person name="Charlab R."/>
            <person name="Nusskern D.R."/>
            <person name="Wincker P."/>
            <person name="Clark A.G."/>
            <person name="Ribeiro J.M.C."/>
            <person name="Wides R."/>
            <person name="Salzberg S.L."/>
            <person name="Loftus B.J."/>
            <person name="Yandell M.D."/>
            <person name="Majoros W.H."/>
            <person name="Rusch D.B."/>
            <person name="Lai Z."/>
            <person name="Kraft C.L."/>
            <person name="Abril J.F."/>
            <person name="Anthouard V."/>
            <person name="Arensburger P."/>
            <person name="Atkinson P.W."/>
            <person name="Baden H."/>
            <person name="de Berardinis V."/>
            <person name="Baldwin D."/>
            <person name="Benes V."/>
            <person name="Biedler J."/>
            <person name="Blass C."/>
            <person name="Bolanos R."/>
            <person name="Boscus D."/>
            <person name="Barnstead M."/>
            <person name="Cai S."/>
            <person name="Center A."/>
            <person name="Chaturverdi K."/>
            <person name="Christophides G.K."/>
            <person name="Chrystal M.A.M."/>
            <person name="Clamp M."/>
            <person name="Cravchik A."/>
            <person name="Curwen V."/>
            <person name="Dana A."/>
            <person name="Delcher A."/>
            <person name="Dew I."/>
            <person name="Evans C.A."/>
            <person name="Flanigan M."/>
            <person name="Grundschober-Freimoser A."/>
            <person name="Friedli L."/>
            <person name="Gu Z."/>
            <person name="Guan P."/>
            <person name="Guigo R."/>
            <person name="Hillenmeyer M.E."/>
            <person name="Hladun S.L."/>
            <person name="Hogan J.R."/>
            <person name="Hong Y.S."/>
            <person name="Hoover J."/>
            <person name="Jaillon O."/>
            <person name="Ke Z."/>
            <person name="Kodira C.D."/>
            <person name="Kokoza E."/>
            <person name="Koutsos A."/>
            <person name="Letunic I."/>
            <person name="Levitsky A.A."/>
            <person name="Liang Y."/>
            <person name="Lin J.-J."/>
            <person name="Lobo N.F."/>
            <person name="Lopez J.R."/>
            <person name="Malek J.A."/>
            <person name="McIntosh T.C."/>
            <person name="Meister S."/>
            <person name="Miller J.R."/>
            <person name="Mobarry C."/>
            <person name="Mongin E."/>
            <person name="Murphy S.D."/>
            <person name="O'Brochta D.A."/>
            <person name="Pfannkoch C."/>
            <person name="Qi R."/>
            <person name="Regier M.A."/>
            <person name="Remington K."/>
            <person name="Shao H."/>
            <person name="Sharakhova M.V."/>
            <person name="Sitter C.D."/>
            <person name="Shetty J."/>
            <person name="Smith T.J."/>
            <person name="Strong R."/>
            <person name="Sun J."/>
            <person name="Thomasova D."/>
            <person name="Ton L.Q."/>
            <person name="Topalis P."/>
            <person name="Tu Z.J."/>
            <person name="Unger M.F."/>
            <person name="Walenz B."/>
            <person name="Wang A.H."/>
            <person name="Wang J."/>
            <person name="Wang M."/>
            <person name="Wang X."/>
            <person name="Woodford K.J."/>
            <person name="Wortman J.R."/>
            <person name="Wu M."/>
            <person name="Yao A."/>
            <person name="Zdobnov E.M."/>
            <person name="Zhang H."/>
            <person name="Zhao Q."/>
            <person name="Zhao S."/>
            <person name="Zhu S.C."/>
            <person name="Zhimulev I."/>
            <person name="Coluzzi M."/>
            <person name="della Torre A."/>
            <person name="Roth C.W."/>
            <person name="Louis C."/>
            <person name="Kalush F."/>
            <person name="Mural R.J."/>
            <person name="Myers E.W."/>
            <person name="Adams M.D."/>
            <person name="Smith H.O."/>
            <person name="Broder S."/>
            <person name="Gardner M.J."/>
            <person name="Fraser C.M."/>
            <person name="Birney E."/>
            <person name="Bork P."/>
            <person name="Brey P.T."/>
            <person name="Venter J.C."/>
            <person name="Weissenbach J."/>
            <person name="Kafatos F.C."/>
            <person name="Collins F.H."/>
            <person name="Hoffman S.L."/>
        </authorList>
    </citation>
    <scope>NUCLEOTIDE SEQUENCE [LARGE SCALE GENOMIC DNA]</scope>
    <source>
        <strain evidence="10">PEST</strain>
    </source>
</reference>
<reference evidence="9" key="2">
    <citation type="journal article" date="2019" name="PLoS Pathog.">
        <title>The mosquito melanization response requires hierarchical activation of non-catalytic clip domain serine protease homologs.</title>
        <authorList>
            <person name="El Moussawi L."/>
            <person name="Nakhleh J."/>
            <person name="Kamareddine L."/>
            <person name="Osta M.A."/>
        </authorList>
    </citation>
    <scope>FUNCTION</scope>
    <scope>SUBCELLULAR LOCATION</scope>
    <scope>PROTEOLYTIC CLEAVAGE</scope>
    <scope>DISRUPTION PHENOTYPE</scope>
    <source>
        <strain evidence="6">G3</strain>
    </source>
</reference>
<reference evidence="9" key="3">
    <citation type="journal article" date="2020" name="PLoS Pathog.">
        <title>The CLIP-domain serine protease CLIPC9 regulates melanization downstream of SPCLIP1, CLIPA8, and CLIPA28 in the malaria vector Anopheles gambiae.</title>
        <authorList>
            <person name="Sousa G.L."/>
            <person name="Bishnoi R."/>
            <person name="Baxter R.H.G."/>
            <person name="Povelones M."/>
        </authorList>
    </citation>
    <scope>FUNCTION</scope>
    <scope>SUBUNIT</scope>
    <scope>SUBCELLULAR LOCATION</scope>
    <scope>PROTEOLYTIC CLEAVAGE</scope>
    <scope>DISRUPTION PHENOTYPE</scope>
    <source>
        <strain evidence="7">G3</strain>
    </source>
</reference>
<keyword id="KW-1015">Disulfide bond</keyword>
<keyword id="KW-0325">Glycoprotein</keyword>
<keyword id="KW-0391">Immunity</keyword>
<keyword id="KW-0399">Innate immunity</keyword>
<keyword id="KW-1185">Reference proteome</keyword>
<keyword id="KW-0964">Secreted</keyword>
<keyword id="KW-0721">Serine protease homolog</keyword>
<keyword id="KW-0732">Signal</keyword>
<sequence length="376" mass="41034">MKVLLFCIVISLTTLIASGQDIEEELRCPGGYCVSKYLCPNGTFIDDIKHAQTTQLIGLRAGLDIDDFDDCNDYLLVCCQSAPAPTATSTEKPATSDELIEPPPSTNLACGQANEGGLIYDLRNNETLSQYAEYPWVVYILALKKQEANSGDFVCGGTLIHSRLVVTTAHNTDGKTDLVARFGEWDISTTKEPFPQQDIDVAEVIKHPQYVFNPIQNDIALLVLAENVQYAAHIRPICLPQPTDEFVGQRCVSNGWGKERGVYANVMKKLTLPVIGRANCTRMLRYAGLGPFYTLREGFLCAGGEVAVDMCKGDGGSPLACQTESGTYVLAGIVSWGIGCGGFNTPGVYVAVNRYVQWLNEHIVDQALNESFDIKL</sequence>
<organism evidence="10">
    <name type="scientific">Anopheles gambiae</name>
    <name type="common">African malaria mosquito</name>
    <dbReference type="NCBI Taxonomy" id="7165"/>
    <lineage>
        <taxon>Eukaryota</taxon>
        <taxon>Metazoa</taxon>
        <taxon>Ecdysozoa</taxon>
        <taxon>Arthropoda</taxon>
        <taxon>Hexapoda</taxon>
        <taxon>Insecta</taxon>
        <taxon>Pterygota</taxon>
        <taxon>Neoptera</taxon>
        <taxon>Endopterygota</taxon>
        <taxon>Diptera</taxon>
        <taxon>Nematocera</taxon>
        <taxon>Culicoidea</taxon>
        <taxon>Culicidae</taxon>
        <taxon>Anophelinae</taxon>
        <taxon>Anopheles</taxon>
    </lineage>
</organism>